<reference key="1">
    <citation type="journal article" date="2006" name="Proc. Natl. Acad. Sci. U.S.A.">
        <title>Genome sequence of Synechococcus CC9311: insights into adaptation to a coastal environment.</title>
        <authorList>
            <person name="Palenik B."/>
            <person name="Ren Q."/>
            <person name="Dupont C.L."/>
            <person name="Myers G.S."/>
            <person name="Heidelberg J.F."/>
            <person name="Badger J.H."/>
            <person name="Madupu R."/>
            <person name="Nelson W.C."/>
            <person name="Brinkac L.M."/>
            <person name="Dodson R.J."/>
            <person name="Durkin A.S."/>
            <person name="Daugherty S.C."/>
            <person name="Sullivan S.A."/>
            <person name="Khouri H."/>
            <person name="Mohamoud Y."/>
            <person name="Halpin R."/>
            <person name="Paulsen I.T."/>
        </authorList>
    </citation>
    <scope>NUCLEOTIDE SEQUENCE [LARGE SCALE GENOMIC DNA]</scope>
    <source>
        <strain>CC9311</strain>
    </source>
</reference>
<protein>
    <recommendedName>
        <fullName evidence="1">Serine hydroxymethyltransferase</fullName>
        <shortName evidence="1">SHMT</shortName>
        <shortName evidence="1">Serine methylase</shortName>
        <ecNumber evidence="1">2.1.2.1</ecNumber>
    </recommendedName>
</protein>
<gene>
    <name evidence="1" type="primary">glyA</name>
    <name type="ordered locus">sync_0300</name>
</gene>
<keyword id="KW-0028">Amino-acid biosynthesis</keyword>
<keyword id="KW-0963">Cytoplasm</keyword>
<keyword id="KW-0554">One-carbon metabolism</keyword>
<keyword id="KW-0663">Pyridoxal phosphate</keyword>
<keyword id="KW-1185">Reference proteome</keyword>
<keyword id="KW-0808">Transferase</keyword>
<sequence length="429" mass="46185">MTDRSAAPINASLKAADPAIAGLIDQEQMRQETHLELIASENFTSKAVMEAQGSVLTNKYAEGLPHKRYYGGCEHVDAIEELAITRAKQLFGAAWANVQPHSGAQANFAVFLALLQPGDTILGMDLSHGGHLTHGSPVNVSGKWFNVVQYGVDKETQRLDMEAIRKLALEHKPKLIICGYSAYPRSIDFAAFRSIADEVGAYLLADMAHIAGLVAAGVHASPVPHCDVVTTTTHKTLRGPRGGLILCRDAEFARRFDKAVFPGSQGGPLEHVIAAKAVAFGEALQPDFKAYSRQVVANAQALAARLQERKIDVVSGGTDNHVVLLDLRSIGMTGKVADLLVSDVHITANKNTVPFDPESPFVTSGLRLGTAALTTRGFDEKAFHEVADVIADRLQNPEDDAIQARCLERVSDLCKRFPLYAPALEPALA</sequence>
<feature type="chain" id="PRO_1000006339" description="Serine hydroxymethyltransferase">
    <location>
        <begin position="1"/>
        <end position="429"/>
    </location>
</feature>
<feature type="binding site" evidence="1">
    <location>
        <position position="126"/>
    </location>
    <ligand>
        <name>(6S)-5,6,7,8-tetrahydrofolate</name>
        <dbReference type="ChEBI" id="CHEBI:57453"/>
    </ligand>
</feature>
<feature type="binding site" evidence="1">
    <location>
        <begin position="130"/>
        <end position="132"/>
    </location>
    <ligand>
        <name>(6S)-5,6,7,8-tetrahydrofolate</name>
        <dbReference type="ChEBI" id="CHEBI:57453"/>
    </ligand>
</feature>
<feature type="binding site" evidence="1">
    <location>
        <begin position="359"/>
        <end position="361"/>
    </location>
    <ligand>
        <name>(6S)-5,6,7,8-tetrahydrofolate</name>
        <dbReference type="ChEBI" id="CHEBI:57453"/>
    </ligand>
</feature>
<feature type="site" description="Plays an important role in substrate specificity" evidence="1">
    <location>
        <position position="234"/>
    </location>
</feature>
<feature type="modified residue" description="N6-(pyridoxal phosphate)lysine" evidence="1">
    <location>
        <position position="235"/>
    </location>
</feature>
<accession>Q0IDD8</accession>
<evidence type="ECO:0000255" key="1">
    <source>
        <dbReference type="HAMAP-Rule" id="MF_00051"/>
    </source>
</evidence>
<proteinExistence type="inferred from homology"/>
<name>GLYA_SYNS3</name>
<organism>
    <name type="scientific">Synechococcus sp. (strain CC9311)</name>
    <dbReference type="NCBI Taxonomy" id="64471"/>
    <lineage>
        <taxon>Bacteria</taxon>
        <taxon>Bacillati</taxon>
        <taxon>Cyanobacteriota</taxon>
        <taxon>Cyanophyceae</taxon>
        <taxon>Synechococcales</taxon>
        <taxon>Synechococcaceae</taxon>
        <taxon>Synechococcus</taxon>
    </lineage>
</organism>
<comment type="function">
    <text evidence="1">Catalyzes the reversible interconversion of serine and glycine with tetrahydrofolate (THF) serving as the one-carbon carrier. This reaction serves as the major source of one-carbon groups required for the biosynthesis of purines, thymidylate, methionine, and other important biomolecules. Also exhibits THF-independent aldolase activity toward beta-hydroxyamino acids, producing glycine and aldehydes, via a retro-aldol mechanism.</text>
</comment>
<comment type="catalytic activity">
    <reaction evidence="1">
        <text>(6R)-5,10-methylene-5,6,7,8-tetrahydrofolate + glycine + H2O = (6S)-5,6,7,8-tetrahydrofolate + L-serine</text>
        <dbReference type="Rhea" id="RHEA:15481"/>
        <dbReference type="ChEBI" id="CHEBI:15377"/>
        <dbReference type="ChEBI" id="CHEBI:15636"/>
        <dbReference type="ChEBI" id="CHEBI:33384"/>
        <dbReference type="ChEBI" id="CHEBI:57305"/>
        <dbReference type="ChEBI" id="CHEBI:57453"/>
        <dbReference type="EC" id="2.1.2.1"/>
    </reaction>
</comment>
<comment type="cofactor">
    <cofactor evidence="1">
        <name>pyridoxal 5'-phosphate</name>
        <dbReference type="ChEBI" id="CHEBI:597326"/>
    </cofactor>
</comment>
<comment type="pathway">
    <text evidence="1">One-carbon metabolism; tetrahydrofolate interconversion.</text>
</comment>
<comment type="pathway">
    <text evidence="1">Amino-acid biosynthesis; glycine biosynthesis; glycine from L-serine: step 1/1.</text>
</comment>
<comment type="subunit">
    <text evidence="1">Homodimer.</text>
</comment>
<comment type="subcellular location">
    <subcellularLocation>
        <location evidence="1">Cytoplasm</location>
    </subcellularLocation>
</comment>
<comment type="similarity">
    <text evidence="1">Belongs to the SHMT family.</text>
</comment>
<dbReference type="EC" id="2.1.2.1" evidence="1"/>
<dbReference type="EMBL" id="CP000435">
    <property type="protein sequence ID" value="ABI46562.1"/>
    <property type="molecule type" value="Genomic_DNA"/>
</dbReference>
<dbReference type="RefSeq" id="WP_011618279.1">
    <property type="nucleotide sequence ID" value="NC_008319.1"/>
</dbReference>
<dbReference type="SMR" id="Q0IDD8"/>
<dbReference type="STRING" id="64471.sync_0300"/>
<dbReference type="KEGG" id="syg:sync_0300"/>
<dbReference type="eggNOG" id="COG0112">
    <property type="taxonomic scope" value="Bacteria"/>
</dbReference>
<dbReference type="HOGENOM" id="CLU_022477_2_1_3"/>
<dbReference type="OrthoDB" id="9803846at2"/>
<dbReference type="UniPathway" id="UPA00193"/>
<dbReference type="UniPathway" id="UPA00288">
    <property type="reaction ID" value="UER01023"/>
</dbReference>
<dbReference type="Proteomes" id="UP000001961">
    <property type="component" value="Chromosome"/>
</dbReference>
<dbReference type="GO" id="GO:0005829">
    <property type="term" value="C:cytosol"/>
    <property type="evidence" value="ECO:0007669"/>
    <property type="project" value="TreeGrafter"/>
</dbReference>
<dbReference type="GO" id="GO:0004372">
    <property type="term" value="F:glycine hydroxymethyltransferase activity"/>
    <property type="evidence" value="ECO:0007669"/>
    <property type="project" value="UniProtKB-UniRule"/>
</dbReference>
<dbReference type="GO" id="GO:0030170">
    <property type="term" value="F:pyridoxal phosphate binding"/>
    <property type="evidence" value="ECO:0007669"/>
    <property type="project" value="UniProtKB-UniRule"/>
</dbReference>
<dbReference type="GO" id="GO:0019264">
    <property type="term" value="P:glycine biosynthetic process from serine"/>
    <property type="evidence" value="ECO:0007669"/>
    <property type="project" value="UniProtKB-UniRule"/>
</dbReference>
<dbReference type="GO" id="GO:0035999">
    <property type="term" value="P:tetrahydrofolate interconversion"/>
    <property type="evidence" value="ECO:0007669"/>
    <property type="project" value="UniProtKB-UniRule"/>
</dbReference>
<dbReference type="CDD" id="cd00378">
    <property type="entry name" value="SHMT"/>
    <property type="match status" value="1"/>
</dbReference>
<dbReference type="FunFam" id="3.40.640.10:FF:000001">
    <property type="entry name" value="Serine hydroxymethyltransferase"/>
    <property type="match status" value="1"/>
</dbReference>
<dbReference type="Gene3D" id="3.90.1150.10">
    <property type="entry name" value="Aspartate Aminotransferase, domain 1"/>
    <property type="match status" value="1"/>
</dbReference>
<dbReference type="Gene3D" id="3.40.640.10">
    <property type="entry name" value="Type I PLP-dependent aspartate aminotransferase-like (Major domain)"/>
    <property type="match status" value="1"/>
</dbReference>
<dbReference type="HAMAP" id="MF_00051">
    <property type="entry name" value="SHMT"/>
    <property type="match status" value="1"/>
</dbReference>
<dbReference type="InterPro" id="IPR015424">
    <property type="entry name" value="PyrdxlP-dep_Trfase"/>
</dbReference>
<dbReference type="InterPro" id="IPR015421">
    <property type="entry name" value="PyrdxlP-dep_Trfase_major"/>
</dbReference>
<dbReference type="InterPro" id="IPR015422">
    <property type="entry name" value="PyrdxlP-dep_Trfase_small"/>
</dbReference>
<dbReference type="InterPro" id="IPR001085">
    <property type="entry name" value="Ser_HO-MeTrfase"/>
</dbReference>
<dbReference type="InterPro" id="IPR049943">
    <property type="entry name" value="Ser_HO-MeTrfase-like"/>
</dbReference>
<dbReference type="InterPro" id="IPR019798">
    <property type="entry name" value="Ser_HO-MeTrfase_PLP_BS"/>
</dbReference>
<dbReference type="InterPro" id="IPR039429">
    <property type="entry name" value="SHMT-like_dom"/>
</dbReference>
<dbReference type="NCBIfam" id="NF000586">
    <property type="entry name" value="PRK00011.1"/>
    <property type="match status" value="1"/>
</dbReference>
<dbReference type="PANTHER" id="PTHR11680">
    <property type="entry name" value="SERINE HYDROXYMETHYLTRANSFERASE"/>
    <property type="match status" value="1"/>
</dbReference>
<dbReference type="PANTHER" id="PTHR11680:SF35">
    <property type="entry name" value="SERINE HYDROXYMETHYLTRANSFERASE 1"/>
    <property type="match status" value="1"/>
</dbReference>
<dbReference type="Pfam" id="PF00464">
    <property type="entry name" value="SHMT"/>
    <property type="match status" value="1"/>
</dbReference>
<dbReference type="PIRSF" id="PIRSF000412">
    <property type="entry name" value="SHMT"/>
    <property type="match status" value="1"/>
</dbReference>
<dbReference type="SUPFAM" id="SSF53383">
    <property type="entry name" value="PLP-dependent transferases"/>
    <property type="match status" value="1"/>
</dbReference>
<dbReference type="PROSITE" id="PS00096">
    <property type="entry name" value="SHMT"/>
    <property type="match status" value="1"/>
</dbReference>